<comment type="function">
    <text evidence="1">Suppressor of RNA-mediated gene silencing, also known as post-transcriptional gene silencing (PTGS), a mechanism of plant viral defense that limits the accumulation of viral RNAs. The P0 protein suppresses local PTGS using its F-box-like domain to mediate destabilization and degradation of the AGO1 protein (By similarity).</text>
</comment>
<comment type="subunit">
    <text evidence="1">Interacts (via F-box-like domain) with host AGO1; this interaction targets AGO1 for degradation, and thereby suppresses the silencing function of the latter. Interacts (via F-box-like domain) with host ASK1 and ASK2 (SKP proteins); these interactions are essential for viral pathogenicity. Part of a SCF P0 complex composed of P0 and the host proteins SKP and CUL1 (By similarity).</text>
</comment>
<comment type="similarity">
    <text evidence="2">Belongs to the polerovirus P0 protein family.</text>
</comment>
<sequence length="218" mass="25366">MQFVAHDNFHTLEVRKVRYLHSRQVTFLLAGLLLNIEQFVKAIKERNNEFKIDIFLRSLLYQLPLHLGDHVHDDVRKSLLVPEPELCAWFSLQTGYAPASTSGRVNLYVPGTKTSRRRIIQRSLASNFSEKFKRFPECLFVGFEHFQRFLSIWTRDAERRLFSGCREIPVGSHTLVELANLGELLRVMVASEQFHNSRLLSRLAVHCYKIYGEDGFIS</sequence>
<organism>
    <name type="scientific">Beet western yellows virus (isolate GB1)</name>
    <name type="common">BWYV</name>
    <dbReference type="NCBI Taxonomy" id="12044"/>
    <lineage>
        <taxon>Viruses</taxon>
        <taxon>Riboviria</taxon>
        <taxon>Orthornavirae</taxon>
        <taxon>Pisuviricota</taxon>
        <taxon>Pisoniviricetes</taxon>
        <taxon>Sobelivirales</taxon>
        <taxon>Solemoviridae</taxon>
        <taxon>Polerovirus</taxon>
        <taxon>Beet western yellows virus</taxon>
    </lineage>
</organism>
<accession>Q9WIB9</accession>
<reference key="1">
    <citation type="journal article" date="1998" name="Arch. Phytopathol. Plant Prot.">
        <title>Comparison of the 5'-end nucleotide sequences of luteoviruses from oilseed rape and sugar beet.</title>
        <authorList>
            <person name="Schubert J."/>
            <person name="Rabenstein F."/>
            <person name="Graichen K."/>
            <person name="Richter K."/>
        </authorList>
    </citation>
    <scope>NUCLEOTIDE SEQUENCE [GENOMIC RNA]</scope>
</reference>
<name>P0_BWYVG</name>
<keyword id="KW-0945">Host-virus interaction</keyword>
<keyword id="KW-1090">Inhibition of host innate immune response by virus</keyword>
<keyword id="KW-0941">Suppressor of RNA silencing</keyword>
<keyword id="KW-0899">Viral immunoevasion</keyword>
<feature type="chain" id="PRO_0000390911" description="Suppressor of silencing P0">
    <location>
        <begin position="1"/>
        <end position="218" status="greater than"/>
    </location>
</feature>
<feature type="domain" description="F-box-like">
    <location>
        <begin position="63"/>
        <end position="67"/>
    </location>
</feature>
<feature type="non-terminal residue">
    <location>
        <position position="218"/>
    </location>
</feature>
<proteinExistence type="inferred from homology"/>
<gene>
    <name type="ORF">ORF0</name>
</gene>
<protein>
    <recommendedName>
        <fullName>Suppressor of silencing P0</fullName>
    </recommendedName>
    <alternativeName>
        <fullName>Protein ORF0</fullName>
    </alternativeName>
</protein>
<dbReference type="EMBL" id="Y16870">
    <property type="protein sequence ID" value="CAB40643.1"/>
    <property type="molecule type" value="Genomic_RNA"/>
</dbReference>
<dbReference type="GO" id="GO:0052170">
    <property type="term" value="P:symbiont-mediated suppression of host innate immune response"/>
    <property type="evidence" value="ECO:0007669"/>
    <property type="project" value="UniProtKB-KW"/>
</dbReference>
<dbReference type="GO" id="GO:0016032">
    <property type="term" value="P:viral process"/>
    <property type="evidence" value="ECO:0007669"/>
    <property type="project" value="InterPro"/>
</dbReference>
<dbReference type="InterPro" id="IPR006755">
    <property type="entry name" value="Virus_P0"/>
</dbReference>
<dbReference type="Pfam" id="PF04662">
    <property type="entry name" value="Luteo_PO"/>
    <property type="match status" value="1"/>
</dbReference>
<organismHost>
    <name type="scientific">Beta vulgaris</name>
    <name type="common">Sugar beet</name>
    <dbReference type="NCBI Taxonomy" id="161934"/>
</organismHost>
<organismHost>
    <name type="scientific">Brassica napus subsp. rapifera</name>
    <dbReference type="NCBI Taxonomy" id="3709"/>
</organismHost>
<organismHost>
    <name type="scientific">Brassica napus var. napus</name>
    <dbReference type="NCBI Taxonomy" id="138011"/>
</organismHost>
<organismHost>
    <name type="scientific">Brassica nigra</name>
    <name type="common">Black mustard</name>
    <name type="synonym">Sinapis nigra</name>
    <dbReference type="NCBI Taxonomy" id="3710"/>
</organismHost>
<organismHost>
    <name type="scientific">Brassica oleracea var. botrytis</name>
    <name type="common">Cauliflower</name>
    <dbReference type="NCBI Taxonomy" id="3715"/>
</organismHost>
<organismHost>
    <name type="scientific">Brassica oleracea var. capitata</name>
    <name type="common">Cabbage</name>
    <dbReference type="NCBI Taxonomy" id="3716"/>
</organismHost>
<organismHost>
    <name type="scientific">Brassica rapa subsp. rapa</name>
    <name type="common">Turnip</name>
    <dbReference type="NCBI Taxonomy" id="51350"/>
</organismHost>
<organismHost>
    <name type="scientific">Capsicum annuum</name>
    <name type="common">Capsicum pepper</name>
    <dbReference type="NCBI Taxonomy" id="4072"/>
</organismHost>
<organismHost>
    <name type="scientific">Cicer arietinum</name>
    <name type="common">Chickpea</name>
    <name type="synonym">Garbanzo</name>
    <dbReference type="NCBI Taxonomy" id="3827"/>
</organismHost>
<organismHost>
    <name type="scientific">Citrullus lanatus</name>
    <name type="common">Watermelon</name>
    <name type="synonym">Citrullus vulgaris</name>
    <dbReference type="NCBI Taxonomy" id="3654"/>
</organismHost>
<organismHost>
    <name type="scientific">Crambe hispanica subsp. abyssinica</name>
    <name type="common">Abyssinian kale</name>
    <name type="synonym">Crambe abyssinica</name>
    <dbReference type="NCBI Taxonomy" id="3721"/>
</organismHost>
<organismHost>
    <name type="scientific">Cucumis sativus</name>
    <name type="common">Cucumber</name>
    <dbReference type="NCBI Taxonomy" id="3659"/>
</organismHost>
<organismHost>
    <name type="scientific">Cucurbita pepo</name>
    <name type="common">Vegetable marrow</name>
    <name type="synonym">Summer squash</name>
    <dbReference type="NCBI Taxonomy" id="3663"/>
</organismHost>
<organismHost>
    <name type="scientific">Glycine max</name>
    <name type="common">Soybean</name>
    <name type="synonym">Glycine hispida</name>
    <dbReference type="NCBI Taxonomy" id="3847"/>
</organismHost>
<organismHost>
    <name type="scientific">Helianthus annuus</name>
    <name type="common">Common sunflower</name>
    <dbReference type="NCBI Taxonomy" id="4232"/>
</organismHost>
<organismHost>
    <name type="scientific">Lactuca sativa</name>
    <name type="common">Garden lettuce</name>
    <dbReference type="NCBI Taxonomy" id="4236"/>
</organismHost>
<organismHost>
    <name type="scientific">Phlox drummondii</name>
    <name type="common">Annual phlox</name>
    <dbReference type="NCBI Taxonomy" id="103529"/>
</organismHost>
<organismHost>
    <name type="scientific">Pisum sativum</name>
    <name type="common">Garden pea</name>
    <name type="synonym">Lathyrus oleraceus</name>
    <dbReference type="NCBI Taxonomy" id="3888"/>
</organismHost>
<organismHost>
    <name type="scientific">Raphanus sativus</name>
    <name type="common">Radish</name>
    <name type="synonym">Raphanus raphanistrum var. sativus</name>
    <dbReference type="NCBI Taxonomy" id="3726"/>
</organismHost>
<organismHost>
    <name type="scientific">Solanum lycopersicum</name>
    <name type="common">Tomato</name>
    <name type="synonym">Lycopersicon esculentum</name>
    <dbReference type="NCBI Taxonomy" id="4081"/>
</organismHost>
<organismHost>
    <name type="scientific">Spinacia oleracea</name>
    <name type="common">Spinach</name>
    <dbReference type="NCBI Taxonomy" id="3562"/>
</organismHost>
<organismHost>
    <name type="scientific">Trifolium subterraneum</name>
    <name type="common">Subterranean clover</name>
    <dbReference type="NCBI Taxonomy" id="3900"/>
</organismHost>
<organismHost>
    <name type="scientific">Vicia faba</name>
    <name type="common">Broad bean</name>
    <name type="synonym">Faba vulgaris</name>
    <dbReference type="NCBI Taxonomy" id="3906"/>
</organismHost>
<evidence type="ECO:0000250" key="1"/>
<evidence type="ECO:0000305" key="2"/>